<feature type="chain" id="PRO_0000233726" description="Bifunctional protein GlmU">
    <location>
        <begin position="1"/>
        <end position="459"/>
    </location>
</feature>
<feature type="region of interest" description="Pyrophosphorylase" evidence="1">
    <location>
        <begin position="1"/>
        <end position="230"/>
    </location>
</feature>
<feature type="region of interest" description="Linker" evidence="1">
    <location>
        <begin position="231"/>
        <end position="251"/>
    </location>
</feature>
<feature type="region of interest" description="N-acetyltransferase" evidence="1">
    <location>
        <begin position="252"/>
        <end position="459"/>
    </location>
</feature>
<feature type="active site" description="Proton acceptor" evidence="1">
    <location>
        <position position="363"/>
    </location>
</feature>
<feature type="binding site" evidence="1">
    <location>
        <begin position="9"/>
        <end position="12"/>
    </location>
    <ligand>
        <name>UDP-N-acetyl-alpha-D-glucosamine</name>
        <dbReference type="ChEBI" id="CHEBI:57705"/>
    </ligand>
</feature>
<feature type="binding site" evidence="1">
    <location>
        <position position="23"/>
    </location>
    <ligand>
        <name>UDP-N-acetyl-alpha-D-glucosamine</name>
        <dbReference type="ChEBI" id="CHEBI:57705"/>
    </ligand>
</feature>
<feature type="binding site" evidence="1">
    <location>
        <position position="73"/>
    </location>
    <ligand>
        <name>UDP-N-acetyl-alpha-D-glucosamine</name>
        <dbReference type="ChEBI" id="CHEBI:57705"/>
    </ligand>
</feature>
<feature type="binding site" evidence="1">
    <location>
        <begin position="78"/>
        <end position="79"/>
    </location>
    <ligand>
        <name>UDP-N-acetyl-alpha-D-glucosamine</name>
        <dbReference type="ChEBI" id="CHEBI:57705"/>
    </ligand>
</feature>
<feature type="binding site" evidence="1">
    <location>
        <position position="103"/>
    </location>
    <ligand>
        <name>Mg(2+)</name>
        <dbReference type="ChEBI" id="CHEBI:18420"/>
    </ligand>
</feature>
<feature type="binding site" evidence="1">
    <location>
        <position position="140"/>
    </location>
    <ligand>
        <name>UDP-N-acetyl-alpha-D-glucosamine</name>
        <dbReference type="ChEBI" id="CHEBI:57705"/>
    </ligand>
</feature>
<feature type="binding site" evidence="1">
    <location>
        <position position="155"/>
    </location>
    <ligand>
        <name>UDP-N-acetyl-alpha-D-glucosamine</name>
        <dbReference type="ChEBI" id="CHEBI:57705"/>
    </ligand>
</feature>
<feature type="binding site" evidence="1">
    <location>
        <position position="170"/>
    </location>
    <ligand>
        <name>UDP-N-acetyl-alpha-D-glucosamine</name>
        <dbReference type="ChEBI" id="CHEBI:57705"/>
    </ligand>
</feature>
<feature type="binding site" evidence="1">
    <location>
        <position position="228"/>
    </location>
    <ligand>
        <name>Mg(2+)</name>
        <dbReference type="ChEBI" id="CHEBI:18420"/>
    </ligand>
</feature>
<feature type="binding site" evidence="1">
    <location>
        <position position="228"/>
    </location>
    <ligand>
        <name>UDP-N-acetyl-alpha-D-glucosamine</name>
        <dbReference type="ChEBI" id="CHEBI:57705"/>
    </ligand>
</feature>
<feature type="binding site" evidence="1">
    <location>
        <position position="333"/>
    </location>
    <ligand>
        <name>UDP-N-acetyl-alpha-D-glucosamine</name>
        <dbReference type="ChEBI" id="CHEBI:57705"/>
    </ligand>
</feature>
<feature type="binding site" evidence="1">
    <location>
        <position position="351"/>
    </location>
    <ligand>
        <name>UDP-N-acetyl-alpha-D-glucosamine</name>
        <dbReference type="ChEBI" id="CHEBI:57705"/>
    </ligand>
</feature>
<feature type="binding site" evidence="1">
    <location>
        <position position="366"/>
    </location>
    <ligand>
        <name>UDP-N-acetyl-alpha-D-glucosamine</name>
        <dbReference type="ChEBI" id="CHEBI:57705"/>
    </ligand>
</feature>
<feature type="binding site" evidence="1">
    <location>
        <position position="377"/>
    </location>
    <ligand>
        <name>UDP-N-acetyl-alpha-D-glucosamine</name>
        <dbReference type="ChEBI" id="CHEBI:57705"/>
    </ligand>
</feature>
<feature type="binding site" evidence="1">
    <location>
        <begin position="386"/>
        <end position="387"/>
    </location>
    <ligand>
        <name>acetyl-CoA</name>
        <dbReference type="ChEBI" id="CHEBI:57288"/>
    </ligand>
</feature>
<feature type="binding site" evidence="1">
    <location>
        <position position="423"/>
    </location>
    <ligand>
        <name>acetyl-CoA</name>
        <dbReference type="ChEBI" id="CHEBI:57288"/>
    </ligand>
</feature>
<feature type="binding site" evidence="1">
    <location>
        <position position="440"/>
    </location>
    <ligand>
        <name>acetyl-CoA</name>
        <dbReference type="ChEBI" id="CHEBI:57288"/>
    </ligand>
</feature>
<gene>
    <name evidence="1" type="primary">glmU</name>
    <name type="ordered locus">BA_0048</name>
    <name type="ordered locus">GBAA_0048</name>
    <name type="ordered locus">BAS0048</name>
</gene>
<name>GLMU_BACAN</name>
<accession>Q81VZ1</accession>
<accession>Q6I4Z5</accession>
<accession>Q6KYN9</accession>
<keyword id="KW-0012">Acyltransferase</keyword>
<keyword id="KW-0133">Cell shape</keyword>
<keyword id="KW-0961">Cell wall biogenesis/degradation</keyword>
<keyword id="KW-0963">Cytoplasm</keyword>
<keyword id="KW-0460">Magnesium</keyword>
<keyword id="KW-0479">Metal-binding</keyword>
<keyword id="KW-0511">Multifunctional enzyme</keyword>
<keyword id="KW-0548">Nucleotidyltransferase</keyword>
<keyword id="KW-0573">Peptidoglycan synthesis</keyword>
<keyword id="KW-1185">Reference proteome</keyword>
<keyword id="KW-0677">Repeat</keyword>
<keyword id="KW-0808">Transferase</keyword>
<protein>
    <recommendedName>
        <fullName evidence="1">Bifunctional protein GlmU</fullName>
    </recommendedName>
    <domain>
        <recommendedName>
            <fullName evidence="1">UDP-N-acetylglucosamine pyrophosphorylase</fullName>
            <ecNumber evidence="1">2.7.7.23</ecNumber>
        </recommendedName>
        <alternativeName>
            <fullName evidence="1">N-acetylglucosamine-1-phosphate uridyltransferase</fullName>
        </alternativeName>
    </domain>
    <domain>
        <recommendedName>
            <fullName evidence="1">Glucosamine-1-phosphate N-acetyltransferase</fullName>
            <ecNumber evidence="1">2.3.1.157</ecNumber>
        </recommendedName>
    </domain>
</protein>
<sequence length="459" mass="49423">MSNRFAVILAAGKGTRMKSKLYKVLHPVCGKPMVQHVVDQVSQLGLQKLVTVVGHGAEMVQEQLGNVSEFALQAEQLGTAHAVDQAAGVLANEEGTTLVICGDTPLITAETMEALLQQHKEAGAMATVLTAYIEEPAGYGRIVRNENGHVEKIVEHKDANEKELAIKEINTGTYCFDNKALFASLSKVSNDNVQGEYYLPDVIEILKNEGHIVSAYQTEHFDETLGVNDRVALSQAEIIMKNRINRKNMVNGVTIIDPSNTYISADAIIGSDTVLHPGTIIEGNTVIGSDCEIGPHTVIRDSEIGDRTTIRQSTVHDSKLGTEVSVGPFAHIRPDSVIGDEVRVGNFVEIKKTVFGNRSKASHLSYIGDAQVGEDVNLGCGSITVNYDGKNKFKTVIGNGVFIGCNSNLVAPVTVEDGAYVAAGSTITENVPSKALSVARARQVNKEDYVDQLLNKKKS</sequence>
<comment type="function">
    <text evidence="1">Catalyzes the last two sequential reactions in the de novo biosynthetic pathway for UDP-N-acetylglucosamine (UDP-GlcNAc). The C-terminal domain catalyzes the transfer of acetyl group from acetyl coenzyme A to glucosamine-1-phosphate (GlcN-1-P) to produce N-acetylglucosamine-1-phosphate (GlcNAc-1-P), which is converted into UDP-GlcNAc by the transfer of uridine 5-monophosphate (from uridine 5-triphosphate), a reaction catalyzed by the N-terminal domain.</text>
</comment>
<comment type="catalytic activity">
    <reaction evidence="1">
        <text>alpha-D-glucosamine 1-phosphate + acetyl-CoA = N-acetyl-alpha-D-glucosamine 1-phosphate + CoA + H(+)</text>
        <dbReference type="Rhea" id="RHEA:13725"/>
        <dbReference type="ChEBI" id="CHEBI:15378"/>
        <dbReference type="ChEBI" id="CHEBI:57287"/>
        <dbReference type="ChEBI" id="CHEBI:57288"/>
        <dbReference type="ChEBI" id="CHEBI:57776"/>
        <dbReference type="ChEBI" id="CHEBI:58516"/>
        <dbReference type="EC" id="2.3.1.157"/>
    </reaction>
</comment>
<comment type="catalytic activity">
    <reaction evidence="1">
        <text>N-acetyl-alpha-D-glucosamine 1-phosphate + UTP + H(+) = UDP-N-acetyl-alpha-D-glucosamine + diphosphate</text>
        <dbReference type="Rhea" id="RHEA:13509"/>
        <dbReference type="ChEBI" id="CHEBI:15378"/>
        <dbReference type="ChEBI" id="CHEBI:33019"/>
        <dbReference type="ChEBI" id="CHEBI:46398"/>
        <dbReference type="ChEBI" id="CHEBI:57705"/>
        <dbReference type="ChEBI" id="CHEBI:57776"/>
        <dbReference type="EC" id="2.7.7.23"/>
    </reaction>
</comment>
<comment type="cofactor">
    <cofactor evidence="1">
        <name>Mg(2+)</name>
        <dbReference type="ChEBI" id="CHEBI:18420"/>
    </cofactor>
    <text evidence="1">Binds 1 Mg(2+) ion per subunit.</text>
</comment>
<comment type="pathway">
    <text evidence="1">Nucleotide-sugar biosynthesis; UDP-N-acetyl-alpha-D-glucosamine biosynthesis; N-acetyl-alpha-D-glucosamine 1-phosphate from alpha-D-glucosamine 6-phosphate (route II): step 2/2.</text>
</comment>
<comment type="pathway">
    <text evidence="1">Nucleotide-sugar biosynthesis; UDP-N-acetyl-alpha-D-glucosamine biosynthesis; UDP-N-acetyl-alpha-D-glucosamine from N-acetyl-alpha-D-glucosamine 1-phosphate: step 1/1.</text>
</comment>
<comment type="pathway">
    <text evidence="1">Bacterial outer membrane biogenesis; LPS lipid A biosynthesis.</text>
</comment>
<comment type="subunit">
    <text evidence="1">Homotrimer.</text>
</comment>
<comment type="subcellular location">
    <subcellularLocation>
        <location evidence="1">Cytoplasm</location>
    </subcellularLocation>
</comment>
<comment type="similarity">
    <text evidence="1">In the N-terminal section; belongs to the N-acetylglucosamine-1-phosphate uridyltransferase family.</text>
</comment>
<comment type="similarity">
    <text evidence="1">In the C-terminal section; belongs to the transferase hexapeptide repeat family.</text>
</comment>
<organism>
    <name type="scientific">Bacillus anthracis</name>
    <dbReference type="NCBI Taxonomy" id="1392"/>
    <lineage>
        <taxon>Bacteria</taxon>
        <taxon>Bacillati</taxon>
        <taxon>Bacillota</taxon>
        <taxon>Bacilli</taxon>
        <taxon>Bacillales</taxon>
        <taxon>Bacillaceae</taxon>
        <taxon>Bacillus</taxon>
        <taxon>Bacillus cereus group</taxon>
    </lineage>
</organism>
<proteinExistence type="inferred from homology"/>
<reference key="1">
    <citation type="journal article" date="2003" name="Nature">
        <title>The genome sequence of Bacillus anthracis Ames and comparison to closely related bacteria.</title>
        <authorList>
            <person name="Read T.D."/>
            <person name="Peterson S.N."/>
            <person name="Tourasse N.J."/>
            <person name="Baillie L.W."/>
            <person name="Paulsen I.T."/>
            <person name="Nelson K.E."/>
            <person name="Tettelin H."/>
            <person name="Fouts D.E."/>
            <person name="Eisen J.A."/>
            <person name="Gill S.R."/>
            <person name="Holtzapple E.K."/>
            <person name="Okstad O.A."/>
            <person name="Helgason E."/>
            <person name="Rilstone J."/>
            <person name="Wu M."/>
            <person name="Kolonay J.F."/>
            <person name="Beanan M.J."/>
            <person name="Dodson R.J."/>
            <person name="Brinkac L.M."/>
            <person name="Gwinn M.L."/>
            <person name="DeBoy R.T."/>
            <person name="Madpu R."/>
            <person name="Daugherty S.C."/>
            <person name="Durkin A.S."/>
            <person name="Haft D.H."/>
            <person name="Nelson W.C."/>
            <person name="Peterson J.D."/>
            <person name="Pop M."/>
            <person name="Khouri H.M."/>
            <person name="Radune D."/>
            <person name="Benton J.L."/>
            <person name="Mahamoud Y."/>
            <person name="Jiang L."/>
            <person name="Hance I.R."/>
            <person name="Weidman J.F."/>
            <person name="Berry K.J."/>
            <person name="Plaut R.D."/>
            <person name="Wolf A.M."/>
            <person name="Watkins K.L."/>
            <person name="Nierman W.C."/>
            <person name="Hazen A."/>
            <person name="Cline R.T."/>
            <person name="Redmond C."/>
            <person name="Thwaite J.E."/>
            <person name="White O."/>
            <person name="Salzberg S.L."/>
            <person name="Thomason B."/>
            <person name="Friedlander A.M."/>
            <person name="Koehler T.M."/>
            <person name="Hanna P.C."/>
            <person name="Kolstoe A.-B."/>
            <person name="Fraser C.M."/>
        </authorList>
    </citation>
    <scope>NUCLEOTIDE SEQUENCE [LARGE SCALE GENOMIC DNA]</scope>
    <source>
        <strain>Ames / isolate Porton</strain>
    </source>
</reference>
<reference key="2">
    <citation type="journal article" date="2009" name="J. Bacteriol.">
        <title>The complete genome sequence of Bacillus anthracis Ames 'Ancestor'.</title>
        <authorList>
            <person name="Ravel J."/>
            <person name="Jiang L."/>
            <person name="Stanley S.T."/>
            <person name="Wilson M.R."/>
            <person name="Decker R.S."/>
            <person name="Read T.D."/>
            <person name="Worsham P."/>
            <person name="Keim P.S."/>
            <person name="Salzberg S.L."/>
            <person name="Fraser-Liggett C.M."/>
            <person name="Rasko D.A."/>
        </authorList>
    </citation>
    <scope>NUCLEOTIDE SEQUENCE [LARGE SCALE GENOMIC DNA]</scope>
    <source>
        <strain>Ames ancestor</strain>
    </source>
</reference>
<reference key="3">
    <citation type="submission" date="2004-01" db="EMBL/GenBank/DDBJ databases">
        <title>Complete genome sequence of Bacillus anthracis Sterne.</title>
        <authorList>
            <person name="Brettin T.S."/>
            <person name="Bruce D."/>
            <person name="Challacombe J.F."/>
            <person name="Gilna P."/>
            <person name="Han C."/>
            <person name="Hill K."/>
            <person name="Hitchcock P."/>
            <person name="Jackson P."/>
            <person name="Keim P."/>
            <person name="Longmire J."/>
            <person name="Lucas S."/>
            <person name="Okinaka R."/>
            <person name="Richardson P."/>
            <person name="Rubin E."/>
            <person name="Tice H."/>
        </authorList>
    </citation>
    <scope>NUCLEOTIDE SEQUENCE [LARGE SCALE GENOMIC DNA]</scope>
    <source>
        <strain>Sterne</strain>
    </source>
</reference>
<dbReference type="EC" id="2.7.7.23" evidence="1"/>
<dbReference type="EC" id="2.3.1.157" evidence="1"/>
<dbReference type="EMBL" id="AE016879">
    <property type="protein sequence ID" value="AAP24103.1"/>
    <property type="molecule type" value="Genomic_DNA"/>
</dbReference>
<dbReference type="EMBL" id="AE017334">
    <property type="protein sequence ID" value="AAT29126.1"/>
    <property type="molecule type" value="Genomic_DNA"/>
</dbReference>
<dbReference type="EMBL" id="AE017225">
    <property type="protein sequence ID" value="AAT52386.1"/>
    <property type="molecule type" value="Genomic_DNA"/>
</dbReference>
<dbReference type="RefSeq" id="NP_842617.1">
    <property type="nucleotide sequence ID" value="NC_003997.3"/>
</dbReference>
<dbReference type="RefSeq" id="WP_000071032.1">
    <property type="nucleotide sequence ID" value="NZ_WXXJ01000001.1"/>
</dbReference>
<dbReference type="RefSeq" id="YP_026335.1">
    <property type="nucleotide sequence ID" value="NC_005945.1"/>
</dbReference>
<dbReference type="SMR" id="Q81VZ1"/>
<dbReference type="STRING" id="261594.GBAA_0048"/>
<dbReference type="DNASU" id="1085656"/>
<dbReference type="GeneID" id="45020089"/>
<dbReference type="KEGG" id="ban:BA_0048"/>
<dbReference type="KEGG" id="bar:GBAA_0048"/>
<dbReference type="KEGG" id="bat:BAS0048"/>
<dbReference type="PATRIC" id="fig|198094.11.peg.45"/>
<dbReference type="eggNOG" id="COG1207">
    <property type="taxonomic scope" value="Bacteria"/>
</dbReference>
<dbReference type="HOGENOM" id="CLU_029499_15_2_9"/>
<dbReference type="OMA" id="TAIVEHK"/>
<dbReference type="OrthoDB" id="9775031at2"/>
<dbReference type="UniPathway" id="UPA00113">
    <property type="reaction ID" value="UER00532"/>
</dbReference>
<dbReference type="UniPathway" id="UPA00113">
    <property type="reaction ID" value="UER00533"/>
</dbReference>
<dbReference type="UniPathway" id="UPA00973"/>
<dbReference type="Proteomes" id="UP000000427">
    <property type="component" value="Chromosome"/>
</dbReference>
<dbReference type="Proteomes" id="UP000000594">
    <property type="component" value="Chromosome"/>
</dbReference>
<dbReference type="GO" id="GO:0005737">
    <property type="term" value="C:cytoplasm"/>
    <property type="evidence" value="ECO:0007669"/>
    <property type="project" value="UniProtKB-SubCell"/>
</dbReference>
<dbReference type="GO" id="GO:0016020">
    <property type="term" value="C:membrane"/>
    <property type="evidence" value="ECO:0007669"/>
    <property type="project" value="GOC"/>
</dbReference>
<dbReference type="GO" id="GO:0019134">
    <property type="term" value="F:glucosamine-1-phosphate N-acetyltransferase activity"/>
    <property type="evidence" value="ECO:0007669"/>
    <property type="project" value="UniProtKB-UniRule"/>
</dbReference>
<dbReference type="GO" id="GO:0000287">
    <property type="term" value="F:magnesium ion binding"/>
    <property type="evidence" value="ECO:0007669"/>
    <property type="project" value="UniProtKB-UniRule"/>
</dbReference>
<dbReference type="GO" id="GO:0003977">
    <property type="term" value="F:UDP-N-acetylglucosamine diphosphorylase activity"/>
    <property type="evidence" value="ECO:0007669"/>
    <property type="project" value="UniProtKB-UniRule"/>
</dbReference>
<dbReference type="GO" id="GO:0000902">
    <property type="term" value="P:cell morphogenesis"/>
    <property type="evidence" value="ECO:0007669"/>
    <property type="project" value="UniProtKB-UniRule"/>
</dbReference>
<dbReference type="GO" id="GO:0071555">
    <property type="term" value="P:cell wall organization"/>
    <property type="evidence" value="ECO:0007669"/>
    <property type="project" value="UniProtKB-KW"/>
</dbReference>
<dbReference type="GO" id="GO:0009245">
    <property type="term" value="P:lipid A biosynthetic process"/>
    <property type="evidence" value="ECO:0007669"/>
    <property type="project" value="UniProtKB-UniRule"/>
</dbReference>
<dbReference type="GO" id="GO:0009252">
    <property type="term" value="P:peptidoglycan biosynthetic process"/>
    <property type="evidence" value="ECO:0007669"/>
    <property type="project" value="UniProtKB-UniRule"/>
</dbReference>
<dbReference type="GO" id="GO:0008360">
    <property type="term" value="P:regulation of cell shape"/>
    <property type="evidence" value="ECO:0007669"/>
    <property type="project" value="UniProtKB-KW"/>
</dbReference>
<dbReference type="GO" id="GO:0006048">
    <property type="term" value="P:UDP-N-acetylglucosamine biosynthetic process"/>
    <property type="evidence" value="ECO:0007669"/>
    <property type="project" value="UniProtKB-UniPathway"/>
</dbReference>
<dbReference type="CDD" id="cd02540">
    <property type="entry name" value="GT2_GlmU_N_bac"/>
    <property type="match status" value="1"/>
</dbReference>
<dbReference type="CDD" id="cd03353">
    <property type="entry name" value="LbH_GlmU_C"/>
    <property type="match status" value="1"/>
</dbReference>
<dbReference type="FunFam" id="2.160.10.10:FF:000016">
    <property type="entry name" value="Bifunctional protein GlmU"/>
    <property type="match status" value="1"/>
</dbReference>
<dbReference type="FunFam" id="3.90.550.10:FF:000006">
    <property type="entry name" value="Bifunctional protein GlmU"/>
    <property type="match status" value="1"/>
</dbReference>
<dbReference type="Gene3D" id="2.160.10.10">
    <property type="entry name" value="Hexapeptide repeat proteins"/>
    <property type="match status" value="1"/>
</dbReference>
<dbReference type="Gene3D" id="3.90.550.10">
    <property type="entry name" value="Spore Coat Polysaccharide Biosynthesis Protein SpsA, Chain A"/>
    <property type="match status" value="1"/>
</dbReference>
<dbReference type="HAMAP" id="MF_01631">
    <property type="entry name" value="GlmU"/>
    <property type="match status" value="1"/>
</dbReference>
<dbReference type="InterPro" id="IPR005882">
    <property type="entry name" value="Bifunctional_GlmU"/>
</dbReference>
<dbReference type="InterPro" id="IPR050065">
    <property type="entry name" value="GlmU-like"/>
</dbReference>
<dbReference type="InterPro" id="IPR038009">
    <property type="entry name" value="GlmU_C_LbH"/>
</dbReference>
<dbReference type="InterPro" id="IPR001451">
    <property type="entry name" value="Hexapep"/>
</dbReference>
<dbReference type="InterPro" id="IPR018357">
    <property type="entry name" value="Hexapep_transf_CS"/>
</dbReference>
<dbReference type="InterPro" id="IPR005835">
    <property type="entry name" value="NTP_transferase_dom"/>
</dbReference>
<dbReference type="InterPro" id="IPR029044">
    <property type="entry name" value="Nucleotide-diphossugar_trans"/>
</dbReference>
<dbReference type="InterPro" id="IPR011004">
    <property type="entry name" value="Trimer_LpxA-like_sf"/>
</dbReference>
<dbReference type="NCBIfam" id="TIGR01173">
    <property type="entry name" value="glmU"/>
    <property type="match status" value="1"/>
</dbReference>
<dbReference type="NCBIfam" id="NF010934">
    <property type="entry name" value="PRK14354.1"/>
    <property type="match status" value="1"/>
</dbReference>
<dbReference type="PANTHER" id="PTHR43584:SF3">
    <property type="entry name" value="BIFUNCTIONAL PROTEIN GLMU"/>
    <property type="match status" value="1"/>
</dbReference>
<dbReference type="PANTHER" id="PTHR43584">
    <property type="entry name" value="NUCLEOTIDYL TRANSFERASE"/>
    <property type="match status" value="1"/>
</dbReference>
<dbReference type="Pfam" id="PF00132">
    <property type="entry name" value="Hexapep"/>
    <property type="match status" value="3"/>
</dbReference>
<dbReference type="Pfam" id="PF00483">
    <property type="entry name" value="NTP_transferase"/>
    <property type="match status" value="1"/>
</dbReference>
<dbReference type="SUPFAM" id="SSF53448">
    <property type="entry name" value="Nucleotide-diphospho-sugar transferases"/>
    <property type="match status" value="1"/>
</dbReference>
<dbReference type="SUPFAM" id="SSF51161">
    <property type="entry name" value="Trimeric LpxA-like enzymes"/>
    <property type="match status" value="1"/>
</dbReference>
<dbReference type="PROSITE" id="PS00101">
    <property type="entry name" value="HEXAPEP_TRANSFERASES"/>
    <property type="match status" value="1"/>
</dbReference>
<evidence type="ECO:0000255" key="1">
    <source>
        <dbReference type="HAMAP-Rule" id="MF_01631"/>
    </source>
</evidence>